<organism>
    <name type="scientific">Rattus norvegicus</name>
    <name type="common">Rat</name>
    <dbReference type="NCBI Taxonomy" id="10116"/>
    <lineage>
        <taxon>Eukaryota</taxon>
        <taxon>Metazoa</taxon>
        <taxon>Chordata</taxon>
        <taxon>Craniata</taxon>
        <taxon>Vertebrata</taxon>
        <taxon>Euteleostomi</taxon>
        <taxon>Mammalia</taxon>
        <taxon>Eutheria</taxon>
        <taxon>Euarchontoglires</taxon>
        <taxon>Glires</taxon>
        <taxon>Rodentia</taxon>
        <taxon>Myomorpha</taxon>
        <taxon>Muroidea</taxon>
        <taxon>Muridae</taxon>
        <taxon>Murinae</taxon>
        <taxon>Rattus</taxon>
    </lineage>
</organism>
<keyword id="KW-0165">Cleavage on pair of basic residues</keyword>
<keyword id="KW-0345">HDL</keyword>
<keyword id="KW-0445">Lipid transport</keyword>
<keyword id="KW-0558">Oxidation</keyword>
<keyword id="KW-1185">Reference proteome</keyword>
<keyword id="KW-0964">Secreted</keyword>
<keyword id="KW-0732">Signal</keyword>
<keyword id="KW-0813">Transport</keyword>
<proteinExistence type="evidence at transcript level"/>
<reference key="1">
    <citation type="journal article" date="1986" name="J. Mol. Biol.">
        <title>Structure and evolution of the apolipoprotein multigene family.</title>
        <authorList>
            <person name="Luo C.-C."/>
            <person name="Li W.-H."/>
            <person name="Moore M.N."/>
            <person name="Chan L."/>
        </authorList>
    </citation>
    <scope>NUCLEOTIDE SEQUENCE [MRNA]</scope>
</reference>
<reference key="2">
    <citation type="journal article" date="1986" name="J. Lipid Res.">
        <title>Amino acid sequence of rat apolipoprotein A-II deduced from the nucleotide sequence of cloned cDNA.</title>
        <authorList>
            <person name="Nagashima M."/>
            <person name="Morris G."/>
            <person name="Howlett G."/>
            <person name="Fidge N."/>
            <person name="Schreiber G."/>
        </authorList>
    </citation>
    <scope>NUCLEOTIDE SEQUENCE [MRNA] OF 12-102</scope>
</reference>
<comment type="function">
    <text>May stabilize HDL (high density lipoprotein) structure by its association with lipids, and affect the HDL metabolism.</text>
</comment>
<comment type="subunit">
    <text evidence="1">Monomer. Interacts with NAXE and NDRG1 (By similarity).</text>
</comment>
<comment type="subcellular location">
    <subcellularLocation>
        <location evidence="1">Secreted</location>
    </subcellularLocation>
</comment>
<comment type="tissue specificity">
    <text>Plasma.</text>
</comment>
<comment type="similarity">
    <text evidence="3">Belongs to the apolipoprotein A2 family.</text>
</comment>
<accession>P04638</accession>
<name>APOA2_RAT</name>
<dbReference type="EMBL" id="X03468">
    <property type="protein sequence ID" value="CAA27185.1"/>
    <property type="molecule type" value="mRNA"/>
</dbReference>
<dbReference type="EMBL" id="M28615">
    <property type="protein sequence ID" value="AAA40750.1"/>
    <property type="molecule type" value="mRNA"/>
</dbReference>
<dbReference type="PIR" id="A24846">
    <property type="entry name" value="A24846"/>
</dbReference>
<dbReference type="RefSeq" id="NP_001416487.1">
    <property type="nucleotide sequence ID" value="NM_001429558.1"/>
</dbReference>
<dbReference type="RefSeq" id="NP_037244.1">
    <property type="nucleotide sequence ID" value="NM_013112.2"/>
</dbReference>
<dbReference type="RefSeq" id="XP_006250300.1">
    <property type="nucleotide sequence ID" value="XM_006250238.2"/>
</dbReference>
<dbReference type="RefSeq" id="XP_006250301.1">
    <property type="nucleotide sequence ID" value="XM_006250239.2"/>
</dbReference>
<dbReference type="SMR" id="P04638"/>
<dbReference type="FunCoup" id="P04638">
    <property type="interactions" value="191"/>
</dbReference>
<dbReference type="STRING" id="10116.ENSRNOP00000004662"/>
<dbReference type="iPTMnet" id="P04638"/>
<dbReference type="PhosphoSitePlus" id="P04638"/>
<dbReference type="PaxDb" id="10116-ENSRNOP00000004662"/>
<dbReference type="Ensembl" id="ENSRNOT00000004662.5">
    <property type="protein sequence ID" value="ENSRNOP00000004662.1"/>
    <property type="gene ID" value="ENSRNOG00000003500.5"/>
</dbReference>
<dbReference type="GeneID" id="25649"/>
<dbReference type="KEGG" id="rno:25649"/>
<dbReference type="UCSC" id="RGD:2131">
    <property type="organism name" value="rat"/>
</dbReference>
<dbReference type="AGR" id="RGD:2131"/>
<dbReference type="CTD" id="336"/>
<dbReference type="RGD" id="2131">
    <property type="gene designation" value="Apoa2"/>
</dbReference>
<dbReference type="eggNOG" id="ENOG502SVYZ">
    <property type="taxonomic scope" value="Eukaryota"/>
</dbReference>
<dbReference type="GeneTree" id="ENSGT00390000003306"/>
<dbReference type="HOGENOM" id="CLU_157351_0_0_1"/>
<dbReference type="InParanoid" id="P04638"/>
<dbReference type="OMA" id="LTICSFE"/>
<dbReference type="OrthoDB" id="9450770at2759"/>
<dbReference type="PhylomeDB" id="P04638"/>
<dbReference type="TreeFam" id="TF338165"/>
<dbReference type="Reactome" id="R-RNO-381426">
    <property type="pathway name" value="Regulation of Insulin-like Growth Factor (IGF) transport and uptake by Insulin-like Growth Factor Binding Proteins (IGFBPs)"/>
</dbReference>
<dbReference type="Reactome" id="R-RNO-8957275">
    <property type="pathway name" value="Post-translational protein phosphorylation"/>
</dbReference>
<dbReference type="Reactome" id="R-RNO-8963888">
    <property type="pathway name" value="Chylomicron assembly"/>
</dbReference>
<dbReference type="Reactome" id="R-RNO-8963901">
    <property type="pathway name" value="Chylomicron remodeling"/>
</dbReference>
<dbReference type="Reactome" id="R-RNO-975634">
    <property type="pathway name" value="Retinoid metabolism and transport"/>
</dbReference>
<dbReference type="PRO" id="PR:P04638"/>
<dbReference type="Proteomes" id="UP000002494">
    <property type="component" value="Chromosome 13"/>
</dbReference>
<dbReference type="Bgee" id="ENSRNOG00000003500">
    <property type="expression patterns" value="Expressed in liver and 18 other cell types or tissues"/>
</dbReference>
<dbReference type="GO" id="GO:0042627">
    <property type="term" value="C:chylomicron"/>
    <property type="evidence" value="ECO:0000266"/>
    <property type="project" value="RGD"/>
</dbReference>
<dbReference type="GO" id="GO:0005615">
    <property type="term" value="C:extracellular space"/>
    <property type="evidence" value="ECO:0000266"/>
    <property type="project" value="RGD"/>
</dbReference>
<dbReference type="GO" id="GO:0034364">
    <property type="term" value="C:high-density lipoprotein particle"/>
    <property type="evidence" value="ECO:0000266"/>
    <property type="project" value="RGD"/>
</dbReference>
<dbReference type="GO" id="GO:0034366">
    <property type="term" value="C:spherical high-density lipoprotein particle"/>
    <property type="evidence" value="ECO:0000266"/>
    <property type="project" value="RGD"/>
</dbReference>
<dbReference type="GO" id="GO:0034361">
    <property type="term" value="C:very-low-density lipoprotein particle"/>
    <property type="evidence" value="ECO:0000266"/>
    <property type="project" value="RGD"/>
</dbReference>
<dbReference type="GO" id="GO:0034190">
    <property type="term" value="F:apolipoprotein receptor binding"/>
    <property type="evidence" value="ECO:0000266"/>
    <property type="project" value="RGD"/>
</dbReference>
<dbReference type="GO" id="GO:0015485">
    <property type="term" value="F:cholesterol binding"/>
    <property type="evidence" value="ECO:0000266"/>
    <property type="project" value="RGD"/>
</dbReference>
<dbReference type="GO" id="GO:0120020">
    <property type="term" value="F:cholesterol transfer activity"/>
    <property type="evidence" value="ECO:0000314"/>
    <property type="project" value="RGD"/>
</dbReference>
<dbReference type="GO" id="GO:0019899">
    <property type="term" value="F:enzyme binding"/>
    <property type="evidence" value="ECO:0000266"/>
    <property type="project" value="RGD"/>
</dbReference>
<dbReference type="GO" id="GO:0031072">
    <property type="term" value="F:heat shock protein binding"/>
    <property type="evidence" value="ECO:0000266"/>
    <property type="project" value="RGD"/>
</dbReference>
<dbReference type="GO" id="GO:0008035">
    <property type="term" value="F:high-density lipoprotein particle binding"/>
    <property type="evidence" value="ECO:0000266"/>
    <property type="project" value="RGD"/>
</dbReference>
<dbReference type="GO" id="GO:0070653">
    <property type="term" value="F:high-density lipoprotein particle receptor binding"/>
    <property type="evidence" value="ECO:0000266"/>
    <property type="project" value="RGD"/>
</dbReference>
<dbReference type="GO" id="GO:0055102">
    <property type="term" value="F:lipase inhibitor activity"/>
    <property type="evidence" value="ECO:0000266"/>
    <property type="project" value="RGD"/>
</dbReference>
<dbReference type="GO" id="GO:0008289">
    <property type="term" value="F:lipid binding"/>
    <property type="evidence" value="ECO:0000266"/>
    <property type="project" value="RGD"/>
</dbReference>
<dbReference type="GO" id="GO:0005319">
    <property type="term" value="F:lipid transporter activity"/>
    <property type="evidence" value="ECO:0000266"/>
    <property type="project" value="RGD"/>
</dbReference>
<dbReference type="GO" id="GO:0031210">
    <property type="term" value="F:phosphatidylcholine binding"/>
    <property type="evidence" value="ECO:0000266"/>
    <property type="project" value="RGD"/>
</dbReference>
<dbReference type="GO" id="GO:0060228">
    <property type="term" value="F:phosphatidylcholine-sterol O-acyltransferase activator activity"/>
    <property type="evidence" value="ECO:0000266"/>
    <property type="project" value="RGD"/>
</dbReference>
<dbReference type="GO" id="GO:0005543">
    <property type="term" value="F:phospholipid binding"/>
    <property type="evidence" value="ECO:0000266"/>
    <property type="project" value="RGD"/>
</dbReference>
<dbReference type="GO" id="GO:0046982">
    <property type="term" value="F:protein heterodimerization activity"/>
    <property type="evidence" value="ECO:0000250"/>
    <property type="project" value="UniProtKB"/>
</dbReference>
<dbReference type="GO" id="GO:0042803">
    <property type="term" value="F:protein homodimerization activity"/>
    <property type="evidence" value="ECO:0000266"/>
    <property type="project" value="RGD"/>
</dbReference>
<dbReference type="GO" id="GO:0048018">
    <property type="term" value="F:receptor ligand activity"/>
    <property type="evidence" value="ECO:0000266"/>
    <property type="project" value="RGD"/>
</dbReference>
<dbReference type="GO" id="GO:0005102">
    <property type="term" value="F:signaling receptor binding"/>
    <property type="evidence" value="ECO:0000266"/>
    <property type="project" value="RGD"/>
</dbReference>
<dbReference type="GO" id="GO:0031100">
    <property type="term" value="P:animal organ regeneration"/>
    <property type="evidence" value="ECO:0000314"/>
    <property type="project" value="RGD"/>
</dbReference>
<dbReference type="GO" id="GO:0071402">
    <property type="term" value="P:cellular response to lipoprotein particle stimulus"/>
    <property type="evidence" value="ECO:0000266"/>
    <property type="project" value="RGD"/>
</dbReference>
<dbReference type="GO" id="GO:0033344">
    <property type="term" value="P:cholesterol efflux"/>
    <property type="evidence" value="ECO:0000266"/>
    <property type="project" value="RGD"/>
</dbReference>
<dbReference type="GO" id="GO:0042632">
    <property type="term" value="P:cholesterol homeostasis"/>
    <property type="evidence" value="ECO:0000266"/>
    <property type="project" value="RGD"/>
</dbReference>
<dbReference type="GO" id="GO:0008203">
    <property type="term" value="P:cholesterol metabolic process"/>
    <property type="evidence" value="ECO:0000266"/>
    <property type="project" value="RGD"/>
</dbReference>
<dbReference type="GO" id="GO:0030301">
    <property type="term" value="P:cholesterol transport"/>
    <property type="evidence" value="ECO:0000314"/>
    <property type="project" value="RGD"/>
</dbReference>
<dbReference type="GO" id="GO:0046340">
    <property type="term" value="P:diacylglycerol catabolic process"/>
    <property type="evidence" value="ECO:0000266"/>
    <property type="project" value="RGD"/>
</dbReference>
<dbReference type="GO" id="GO:0034380">
    <property type="term" value="P:high-density lipoprotein particle assembly"/>
    <property type="evidence" value="ECO:0000266"/>
    <property type="project" value="RGD"/>
</dbReference>
<dbReference type="GO" id="GO:0034384">
    <property type="term" value="P:high-density lipoprotein particle clearance"/>
    <property type="evidence" value="ECO:0000266"/>
    <property type="project" value="RGD"/>
</dbReference>
<dbReference type="GO" id="GO:0034375">
    <property type="term" value="P:high-density lipoprotein particle remodeling"/>
    <property type="evidence" value="ECO:0000266"/>
    <property type="project" value="RGD"/>
</dbReference>
<dbReference type="GO" id="GO:0006869">
    <property type="term" value="P:lipid transport"/>
    <property type="evidence" value="ECO:0000266"/>
    <property type="project" value="RGD"/>
</dbReference>
<dbReference type="GO" id="GO:0042157">
    <property type="term" value="P:lipoprotein metabolic process"/>
    <property type="evidence" value="ECO:0000266"/>
    <property type="project" value="RGD"/>
</dbReference>
<dbReference type="GO" id="GO:0034374">
    <property type="term" value="P:low-density lipoprotein particle remodeling"/>
    <property type="evidence" value="ECO:0000266"/>
    <property type="project" value="RGD"/>
</dbReference>
<dbReference type="GO" id="GO:0060621">
    <property type="term" value="P:negative regulation of cholesterol import"/>
    <property type="evidence" value="ECO:0000266"/>
    <property type="project" value="RGD"/>
</dbReference>
<dbReference type="GO" id="GO:0032375">
    <property type="term" value="P:negative regulation of cholesterol transport"/>
    <property type="evidence" value="ECO:0000266"/>
    <property type="project" value="RGD"/>
</dbReference>
<dbReference type="GO" id="GO:0002719">
    <property type="term" value="P:negative regulation of cytokine production involved in immune response"/>
    <property type="evidence" value="ECO:0000266"/>
    <property type="project" value="RGD"/>
</dbReference>
<dbReference type="GO" id="GO:0050995">
    <property type="term" value="P:negative regulation of lipid catabolic process"/>
    <property type="evidence" value="ECO:0000266"/>
    <property type="project" value="RGD"/>
</dbReference>
<dbReference type="GO" id="GO:0010903">
    <property type="term" value="P:negative regulation of very-low-density lipoprotein particle remodeling"/>
    <property type="evidence" value="ECO:0000266"/>
    <property type="project" value="RGD"/>
</dbReference>
<dbReference type="GO" id="GO:0006656">
    <property type="term" value="P:phosphatidylcholine biosynthetic process"/>
    <property type="evidence" value="ECO:0000266"/>
    <property type="project" value="RGD"/>
</dbReference>
<dbReference type="GO" id="GO:0009395">
    <property type="term" value="P:phospholipid catabolic process"/>
    <property type="evidence" value="ECO:0000266"/>
    <property type="project" value="RGD"/>
</dbReference>
<dbReference type="GO" id="GO:0033700">
    <property type="term" value="P:phospholipid efflux"/>
    <property type="evidence" value="ECO:0000266"/>
    <property type="project" value="RGD"/>
</dbReference>
<dbReference type="GO" id="GO:0032757">
    <property type="term" value="P:positive regulation of interleukin-8 production"/>
    <property type="evidence" value="ECO:0000250"/>
    <property type="project" value="UniProtKB"/>
</dbReference>
<dbReference type="GO" id="GO:0050996">
    <property type="term" value="P:positive regulation of lipid catabolic process"/>
    <property type="evidence" value="ECO:0000266"/>
    <property type="project" value="RGD"/>
</dbReference>
<dbReference type="GO" id="GO:0050766">
    <property type="term" value="P:positive regulation of phagocytosis"/>
    <property type="evidence" value="ECO:0000250"/>
    <property type="project" value="UniProtKB"/>
</dbReference>
<dbReference type="GO" id="GO:0050821">
    <property type="term" value="P:protein stabilization"/>
    <property type="evidence" value="ECO:0000250"/>
    <property type="project" value="UniProtKB"/>
</dbReference>
<dbReference type="GO" id="GO:0030300">
    <property type="term" value="P:regulation of intestinal cholesterol absorption"/>
    <property type="evidence" value="ECO:0000266"/>
    <property type="project" value="RGD"/>
</dbReference>
<dbReference type="GO" id="GO:0031647">
    <property type="term" value="P:regulation of protein stability"/>
    <property type="evidence" value="ECO:0000266"/>
    <property type="project" value="RGD"/>
</dbReference>
<dbReference type="GO" id="GO:0043627">
    <property type="term" value="P:response to estrogen"/>
    <property type="evidence" value="ECO:0000270"/>
    <property type="project" value="RGD"/>
</dbReference>
<dbReference type="GO" id="GO:0051384">
    <property type="term" value="P:response to glucocorticoid"/>
    <property type="evidence" value="ECO:0000270"/>
    <property type="project" value="RGD"/>
</dbReference>
<dbReference type="GO" id="GO:0009749">
    <property type="term" value="P:response to glucose"/>
    <property type="evidence" value="ECO:0000266"/>
    <property type="project" value="RGD"/>
</dbReference>
<dbReference type="GO" id="GO:0009410">
    <property type="term" value="P:response to xenobiotic stimulus"/>
    <property type="evidence" value="ECO:0000270"/>
    <property type="project" value="RGD"/>
</dbReference>
<dbReference type="GO" id="GO:0043691">
    <property type="term" value="P:reverse cholesterol transport"/>
    <property type="evidence" value="ECO:0000266"/>
    <property type="project" value="RGD"/>
</dbReference>
<dbReference type="GO" id="GO:0034370">
    <property type="term" value="P:triglyceride-rich lipoprotein particle remodeling"/>
    <property type="evidence" value="ECO:0000266"/>
    <property type="project" value="RGD"/>
</dbReference>
<dbReference type="Gene3D" id="6.10.250.100">
    <property type="match status" value="1"/>
</dbReference>
<dbReference type="InterPro" id="IPR006801">
    <property type="entry name" value="ApoA-II"/>
</dbReference>
<dbReference type="InterPro" id="IPR036172">
    <property type="entry name" value="ApoA-II_sf"/>
</dbReference>
<dbReference type="PANTHER" id="PTHR11027">
    <property type="entry name" value="APOLIPOPROTEIN A-II"/>
    <property type="match status" value="1"/>
</dbReference>
<dbReference type="PANTHER" id="PTHR11027:SF0">
    <property type="entry name" value="APOLIPOPROTEIN A-II"/>
    <property type="match status" value="1"/>
</dbReference>
<dbReference type="Pfam" id="PF04711">
    <property type="entry name" value="ApoA-II"/>
    <property type="match status" value="1"/>
</dbReference>
<dbReference type="SUPFAM" id="SSF82936">
    <property type="entry name" value="Apolipoprotein A-II"/>
    <property type="match status" value="1"/>
</dbReference>
<sequence>MKLLAMVALLVTICSLEGALVRRQAAETDVQTLFSQYLQSLTDYGKDLMEKAQPSEIQNQAKAYFQNAQERLTPFVQRTGTNLMDFLSRLMSPEEKPAPAAK</sequence>
<protein>
    <recommendedName>
        <fullName>Apolipoprotein A-II</fullName>
        <shortName>Apo-AII</shortName>
        <shortName>ApoA-II</shortName>
    </recommendedName>
    <alternativeName>
        <fullName>Apolipoprotein A2</fullName>
    </alternativeName>
    <component>
        <recommendedName>
            <fullName>Proapolipoprotein A-II</fullName>
            <shortName>ProapoA-II</shortName>
        </recommendedName>
    </component>
</protein>
<feature type="signal peptide">
    <location>
        <begin position="1"/>
        <end position="18"/>
    </location>
</feature>
<feature type="chain" id="PRO_0000425360" description="Proapolipoprotein A-II">
    <location>
        <begin position="19"/>
        <end position="102"/>
    </location>
</feature>
<feature type="chain" id="PRO_0000002012" description="Apolipoprotein A-II" evidence="2">
    <location>
        <begin position="24"/>
        <end position="102"/>
    </location>
</feature>
<feature type="modified residue" description="Methionine sulfoxide" evidence="1">
    <location>
        <position position="49"/>
    </location>
</feature>
<evidence type="ECO:0000250" key="1">
    <source>
        <dbReference type="UniProtKB" id="P02652"/>
    </source>
</evidence>
<evidence type="ECO:0000250" key="2">
    <source>
        <dbReference type="UniProtKB" id="P09813"/>
    </source>
</evidence>
<evidence type="ECO:0000305" key="3"/>
<gene>
    <name type="primary">Apoa2</name>
</gene>